<name>NDPA_YERPS</name>
<comment type="subcellular location">
    <subcellularLocation>
        <location evidence="1">Cytoplasm</location>
        <location evidence="1">Nucleoid</location>
    </subcellularLocation>
</comment>
<comment type="similarity">
    <text evidence="1">Belongs to the YejK family.</text>
</comment>
<accession>Q66CV4</accession>
<proteinExistence type="inferred from homology"/>
<gene>
    <name type="ordered locus">YPTB1298</name>
</gene>
<reference key="1">
    <citation type="journal article" date="2004" name="Proc. Natl. Acad. Sci. U.S.A.">
        <title>Insights into the evolution of Yersinia pestis through whole-genome comparison with Yersinia pseudotuberculosis.</title>
        <authorList>
            <person name="Chain P.S.G."/>
            <person name="Carniel E."/>
            <person name="Larimer F.W."/>
            <person name="Lamerdin J."/>
            <person name="Stoutland P.O."/>
            <person name="Regala W.M."/>
            <person name="Georgescu A.M."/>
            <person name="Vergez L.M."/>
            <person name="Land M.L."/>
            <person name="Motin V.L."/>
            <person name="Brubaker R.R."/>
            <person name="Fowler J."/>
            <person name="Hinnebusch J."/>
            <person name="Marceau M."/>
            <person name="Medigue C."/>
            <person name="Simonet M."/>
            <person name="Chenal-Francisque V."/>
            <person name="Souza B."/>
            <person name="Dacheux D."/>
            <person name="Elliott J.M."/>
            <person name="Derbise A."/>
            <person name="Hauser L.J."/>
            <person name="Garcia E."/>
        </authorList>
    </citation>
    <scope>NUCLEOTIDE SEQUENCE [LARGE SCALE GENOMIC DNA]</scope>
    <source>
        <strain>IP32953</strain>
    </source>
</reference>
<evidence type="ECO:0000255" key="1">
    <source>
        <dbReference type="HAMAP-Rule" id="MF_00730"/>
    </source>
</evidence>
<keyword id="KW-0963">Cytoplasm</keyword>
<protein>
    <recommendedName>
        <fullName evidence="1">Nucleoid-associated protein YPTB1298</fullName>
    </recommendedName>
</protein>
<feature type="chain" id="PRO_0000210927" description="Nucleoid-associated protein YPTB1298">
    <location>
        <begin position="1"/>
        <end position="334"/>
    </location>
</feature>
<sequence>MSLDIDQIALHQLIKRDEQTLDVVLRDSLLPTNAVVEEMMAELHRVYSAKSKAYGLFNEQSELADALKRSRKGDEDFLSFSRAATGRLRDELAKYPFAEGGVVLFCQYRYLAVEYLLISVLSSCHSMRVNEQLDLSTTHYLDINRADIVARIDLTEWETNPESTRYLTFLKGRVGRKVSDFFMDFLSAAEGLDTKAQNRGLLQAVDDYCADAELGKNERQAYRQQVYSYCNEQLRAGEEIALQVLAQELPKLGEKDFQQFSAEQGYALEESFPADRGTLRQLTKFAGSGGGLSINFDALLLDERIFWDAATDTLTIKGTPPNLRDQLQRRAGSK</sequence>
<organism>
    <name type="scientific">Yersinia pseudotuberculosis serotype I (strain IP32953)</name>
    <dbReference type="NCBI Taxonomy" id="273123"/>
    <lineage>
        <taxon>Bacteria</taxon>
        <taxon>Pseudomonadati</taxon>
        <taxon>Pseudomonadota</taxon>
        <taxon>Gammaproteobacteria</taxon>
        <taxon>Enterobacterales</taxon>
        <taxon>Yersiniaceae</taxon>
        <taxon>Yersinia</taxon>
    </lineage>
</organism>
<dbReference type="EMBL" id="BX936398">
    <property type="protein sequence ID" value="CAH20538.1"/>
    <property type="molecule type" value="Genomic_DNA"/>
</dbReference>
<dbReference type="RefSeq" id="WP_011192011.1">
    <property type="nucleotide sequence ID" value="NC_006155.1"/>
</dbReference>
<dbReference type="SMR" id="Q66CV4"/>
<dbReference type="GeneID" id="49786620"/>
<dbReference type="KEGG" id="ypo:BZ17_1223"/>
<dbReference type="KEGG" id="yps:YPTB1298"/>
<dbReference type="PATRIC" id="fig|273123.14.peg.1308"/>
<dbReference type="Proteomes" id="UP000001011">
    <property type="component" value="Chromosome"/>
</dbReference>
<dbReference type="GO" id="GO:0043590">
    <property type="term" value="C:bacterial nucleoid"/>
    <property type="evidence" value="ECO:0007669"/>
    <property type="project" value="TreeGrafter"/>
</dbReference>
<dbReference type="GO" id="GO:0005737">
    <property type="term" value="C:cytoplasm"/>
    <property type="evidence" value="ECO:0007669"/>
    <property type="project" value="UniProtKB-UniRule"/>
</dbReference>
<dbReference type="GO" id="GO:0003690">
    <property type="term" value="F:double-stranded DNA binding"/>
    <property type="evidence" value="ECO:0007669"/>
    <property type="project" value="TreeGrafter"/>
</dbReference>
<dbReference type="GO" id="GO:0003727">
    <property type="term" value="F:single-stranded RNA binding"/>
    <property type="evidence" value="ECO:0007669"/>
    <property type="project" value="TreeGrafter"/>
</dbReference>
<dbReference type="HAMAP" id="MF_00730">
    <property type="entry name" value="NdpA"/>
    <property type="match status" value="1"/>
</dbReference>
<dbReference type="InterPro" id="IPR007358">
    <property type="entry name" value="Nucleoid_associated_NdpA"/>
</dbReference>
<dbReference type="NCBIfam" id="NF001557">
    <property type="entry name" value="PRK00378.1"/>
    <property type="match status" value="1"/>
</dbReference>
<dbReference type="PANTHER" id="PTHR38772">
    <property type="match status" value="1"/>
</dbReference>
<dbReference type="PANTHER" id="PTHR38772:SF1">
    <property type="entry name" value="NUCLEOID-ASSOCIATED PROTEIN YEJK"/>
    <property type="match status" value="1"/>
</dbReference>
<dbReference type="Pfam" id="PF04245">
    <property type="entry name" value="NA37"/>
    <property type="match status" value="1"/>
</dbReference>